<accession>A8AE22</accession>
<name>CCME_CITK8</name>
<evidence type="ECO:0000255" key="1">
    <source>
        <dbReference type="HAMAP-Rule" id="MF_01959"/>
    </source>
</evidence>
<evidence type="ECO:0000256" key="2">
    <source>
        <dbReference type="SAM" id="MobiDB-lite"/>
    </source>
</evidence>
<gene>
    <name evidence="1" type="primary">ccmE</name>
    <name evidence="1" type="synonym">cycJ</name>
    <name type="ordered locus">CKO_00579</name>
</gene>
<proteinExistence type="inferred from homology"/>
<comment type="function">
    <text evidence="1">Heme chaperone required for the biogenesis of c-type cytochromes. Transiently binds heme delivered by CcmC and transfers the heme to apo-cytochromes in a process facilitated by CcmF and CcmH.</text>
</comment>
<comment type="subcellular location">
    <subcellularLocation>
        <location evidence="1">Cell inner membrane</location>
        <topology evidence="1">Single-pass type II membrane protein</topology>
        <orientation evidence="1">Periplasmic side</orientation>
    </subcellularLocation>
</comment>
<comment type="similarity">
    <text evidence="1">Belongs to the CcmE/CycJ family.</text>
</comment>
<feature type="chain" id="PRO_1000070808" description="Cytochrome c-type biogenesis protein CcmE">
    <location>
        <begin position="1"/>
        <end position="159"/>
    </location>
</feature>
<feature type="topological domain" description="Cytoplasmic" evidence="1">
    <location>
        <begin position="1"/>
        <end position="8"/>
    </location>
</feature>
<feature type="transmembrane region" description="Helical; Signal-anchor for type II membrane protein" evidence="1">
    <location>
        <begin position="9"/>
        <end position="29"/>
    </location>
</feature>
<feature type="topological domain" description="Periplasmic" evidence="1">
    <location>
        <begin position="30"/>
        <end position="159"/>
    </location>
</feature>
<feature type="region of interest" description="Disordered" evidence="2">
    <location>
        <begin position="130"/>
        <end position="159"/>
    </location>
</feature>
<feature type="binding site" description="covalent" evidence="1">
    <location>
        <position position="130"/>
    </location>
    <ligand>
        <name>heme</name>
        <dbReference type="ChEBI" id="CHEBI:30413"/>
    </ligand>
</feature>
<feature type="binding site" description="axial binding residue" evidence="1">
    <location>
        <position position="134"/>
    </location>
    <ligand>
        <name>heme</name>
        <dbReference type="ChEBI" id="CHEBI:30413"/>
    </ligand>
    <ligandPart>
        <name>Fe</name>
        <dbReference type="ChEBI" id="CHEBI:18248"/>
    </ligandPart>
</feature>
<dbReference type="EMBL" id="CP000822">
    <property type="protein sequence ID" value="ABV11734.1"/>
    <property type="molecule type" value="Genomic_DNA"/>
</dbReference>
<dbReference type="RefSeq" id="WP_012131559.1">
    <property type="nucleotide sequence ID" value="NC_009792.1"/>
</dbReference>
<dbReference type="SMR" id="A8AE22"/>
<dbReference type="STRING" id="290338.CKO_00579"/>
<dbReference type="GeneID" id="45134814"/>
<dbReference type="KEGG" id="cko:CKO_00579"/>
<dbReference type="HOGENOM" id="CLU_079503_1_0_6"/>
<dbReference type="OrthoDB" id="9793584at2"/>
<dbReference type="Proteomes" id="UP000008148">
    <property type="component" value="Chromosome"/>
</dbReference>
<dbReference type="GO" id="GO:0005886">
    <property type="term" value="C:plasma membrane"/>
    <property type="evidence" value="ECO:0007669"/>
    <property type="project" value="UniProtKB-SubCell"/>
</dbReference>
<dbReference type="GO" id="GO:0020037">
    <property type="term" value="F:heme binding"/>
    <property type="evidence" value="ECO:0007669"/>
    <property type="project" value="InterPro"/>
</dbReference>
<dbReference type="GO" id="GO:0046872">
    <property type="term" value="F:metal ion binding"/>
    <property type="evidence" value="ECO:0007669"/>
    <property type="project" value="UniProtKB-KW"/>
</dbReference>
<dbReference type="GO" id="GO:0017004">
    <property type="term" value="P:cytochrome complex assembly"/>
    <property type="evidence" value="ECO:0007669"/>
    <property type="project" value="UniProtKB-KW"/>
</dbReference>
<dbReference type="FunFam" id="2.40.50.140:FF:000104">
    <property type="entry name" value="Cytochrome c-type biogenesis protein CcmE"/>
    <property type="match status" value="1"/>
</dbReference>
<dbReference type="Gene3D" id="2.40.50.140">
    <property type="entry name" value="Nucleic acid-binding proteins"/>
    <property type="match status" value="1"/>
</dbReference>
<dbReference type="HAMAP" id="MF_01959">
    <property type="entry name" value="CcmE"/>
    <property type="match status" value="1"/>
</dbReference>
<dbReference type="InterPro" id="IPR004329">
    <property type="entry name" value="CcmE"/>
</dbReference>
<dbReference type="InterPro" id="IPR036127">
    <property type="entry name" value="CcmE-like_sf"/>
</dbReference>
<dbReference type="InterPro" id="IPR012340">
    <property type="entry name" value="NA-bd_OB-fold"/>
</dbReference>
<dbReference type="NCBIfam" id="NF009635">
    <property type="entry name" value="PRK13150.1"/>
    <property type="match status" value="1"/>
</dbReference>
<dbReference type="NCBIfam" id="NF009638">
    <property type="entry name" value="PRK13165.1"/>
    <property type="match status" value="1"/>
</dbReference>
<dbReference type="NCBIfam" id="NF009727">
    <property type="entry name" value="PRK13254.1-1"/>
    <property type="match status" value="1"/>
</dbReference>
<dbReference type="NCBIfam" id="NF009729">
    <property type="entry name" value="PRK13254.1-3"/>
    <property type="match status" value="1"/>
</dbReference>
<dbReference type="PANTHER" id="PTHR34128">
    <property type="entry name" value="CYTOCHROME C-TYPE BIOGENESIS PROTEIN CCME HOMOLOG, MITOCHONDRIAL"/>
    <property type="match status" value="1"/>
</dbReference>
<dbReference type="PANTHER" id="PTHR34128:SF2">
    <property type="entry name" value="CYTOCHROME C-TYPE BIOGENESIS PROTEIN CCME HOMOLOG, MITOCHONDRIAL"/>
    <property type="match status" value="1"/>
</dbReference>
<dbReference type="Pfam" id="PF03100">
    <property type="entry name" value="CcmE"/>
    <property type="match status" value="1"/>
</dbReference>
<dbReference type="SUPFAM" id="SSF82093">
    <property type="entry name" value="Heme chaperone CcmE"/>
    <property type="match status" value="1"/>
</dbReference>
<sequence length="159" mass="17907">MNIRRKNRLWIACAVLAGLALTITLVLYALRSNIDLFYTPGEILYGKRETHQLPEVGQRLRVGGMVMPGSVKRDPDSLKVNFSIYDAEGVVDVTYEGILPDLFREGQGVVVQGELGEKNHVQAKEVLAKHDENYTPPEVEKAMQENHRRPESVYKDKAS</sequence>
<reference key="1">
    <citation type="submission" date="2007-08" db="EMBL/GenBank/DDBJ databases">
        <authorList>
            <consortium name="The Citrobacter koseri Genome Sequencing Project"/>
            <person name="McClelland M."/>
            <person name="Sanderson E.K."/>
            <person name="Porwollik S."/>
            <person name="Spieth J."/>
            <person name="Clifton W.S."/>
            <person name="Latreille P."/>
            <person name="Courtney L."/>
            <person name="Wang C."/>
            <person name="Pepin K."/>
            <person name="Bhonagiri V."/>
            <person name="Nash W."/>
            <person name="Johnson M."/>
            <person name="Thiruvilangam P."/>
            <person name="Wilson R."/>
        </authorList>
    </citation>
    <scope>NUCLEOTIDE SEQUENCE [LARGE SCALE GENOMIC DNA]</scope>
    <source>
        <strain>ATCC BAA-895 / CDC 4225-83 / SGSC4696</strain>
    </source>
</reference>
<protein>
    <recommendedName>
        <fullName evidence="1">Cytochrome c-type biogenesis protein CcmE</fullName>
    </recommendedName>
    <alternativeName>
        <fullName evidence="1">Cytochrome c maturation protein E</fullName>
    </alternativeName>
    <alternativeName>
        <fullName evidence="1">Heme chaperone CcmE</fullName>
    </alternativeName>
</protein>
<keyword id="KW-0997">Cell inner membrane</keyword>
<keyword id="KW-1003">Cell membrane</keyword>
<keyword id="KW-0201">Cytochrome c-type biogenesis</keyword>
<keyword id="KW-0349">Heme</keyword>
<keyword id="KW-0408">Iron</keyword>
<keyword id="KW-0472">Membrane</keyword>
<keyword id="KW-0479">Metal-binding</keyword>
<keyword id="KW-1185">Reference proteome</keyword>
<keyword id="KW-0735">Signal-anchor</keyword>
<keyword id="KW-0812">Transmembrane</keyword>
<keyword id="KW-1133">Transmembrane helix</keyword>
<organism>
    <name type="scientific">Citrobacter koseri (strain ATCC BAA-895 / CDC 4225-83 / SGSC4696)</name>
    <dbReference type="NCBI Taxonomy" id="290338"/>
    <lineage>
        <taxon>Bacteria</taxon>
        <taxon>Pseudomonadati</taxon>
        <taxon>Pseudomonadota</taxon>
        <taxon>Gammaproteobacteria</taxon>
        <taxon>Enterobacterales</taxon>
        <taxon>Enterobacteriaceae</taxon>
        <taxon>Citrobacter</taxon>
    </lineage>
</organism>